<evidence type="ECO:0000255" key="1"/>
<evidence type="ECO:0000255" key="2">
    <source>
        <dbReference type="PROSITE-ProRule" id="PRU00250"/>
    </source>
</evidence>
<evidence type="ECO:0000256" key="3">
    <source>
        <dbReference type="SAM" id="MobiDB-lite"/>
    </source>
</evidence>
<evidence type="ECO:0000269" key="4">
    <source>
    </source>
</evidence>
<protein>
    <recommendedName>
        <fullName>GRIP and coiled-coil domain-containing protein C27D7.02c</fullName>
    </recommendedName>
</protein>
<organism>
    <name type="scientific">Schizosaccharomyces pombe (strain 972 / ATCC 24843)</name>
    <name type="common">Fission yeast</name>
    <dbReference type="NCBI Taxonomy" id="284812"/>
    <lineage>
        <taxon>Eukaryota</taxon>
        <taxon>Fungi</taxon>
        <taxon>Dikarya</taxon>
        <taxon>Ascomycota</taxon>
        <taxon>Taphrinomycotina</taxon>
        <taxon>Schizosaccharomycetes</taxon>
        <taxon>Schizosaccharomycetales</taxon>
        <taxon>Schizosaccharomycetaceae</taxon>
        <taxon>Schizosaccharomyces</taxon>
    </lineage>
</organism>
<name>YF82_SCHPO</name>
<reference key="1">
    <citation type="journal article" date="2002" name="Nature">
        <title>The genome sequence of Schizosaccharomyces pombe.</title>
        <authorList>
            <person name="Wood V."/>
            <person name="Gwilliam R."/>
            <person name="Rajandream M.A."/>
            <person name="Lyne M.H."/>
            <person name="Lyne R."/>
            <person name="Stewart A."/>
            <person name="Sgouros J.G."/>
            <person name="Peat N."/>
            <person name="Hayles J."/>
            <person name="Baker S.G."/>
            <person name="Basham D."/>
            <person name="Bowman S."/>
            <person name="Brooks K."/>
            <person name="Brown D."/>
            <person name="Brown S."/>
            <person name="Chillingworth T."/>
            <person name="Churcher C.M."/>
            <person name="Collins M."/>
            <person name="Connor R."/>
            <person name="Cronin A."/>
            <person name="Davis P."/>
            <person name="Feltwell T."/>
            <person name="Fraser A."/>
            <person name="Gentles S."/>
            <person name="Goble A."/>
            <person name="Hamlin N."/>
            <person name="Harris D.E."/>
            <person name="Hidalgo J."/>
            <person name="Hodgson G."/>
            <person name="Holroyd S."/>
            <person name="Hornsby T."/>
            <person name="Howarth S."/>
            <person name="Huckle E.J."/>
            <person name="Hunt S."/>
            <person name="Jagels K."/>
            <person name="James K.D."/>
            <person name="Jones L."/>
            <person name="Jones M."/>
            <person name="Leather S."/>
            <person name="McDonald S."/>
            <person name="McLean J."/>
            <person name="Mooney P."/>
            <person name="Moule S."/>
            <person name="Mungall K.L."/>
            <person name="Murphy L.D."/>
            <person name="Niblett D."/>
            <person name="Odell C."/>
            <person name="Oliver K."/>
            <person name="O'Neil S."/>
            <person name="Pearson D."/>
            <person name="Quail M.A."/>
            <person name="Rabbinowitsch E."/>
            <person name="Rutherford K.M."/>
            <person name="Rutter S."/>
            <person name="Saunders D."/>
            <person name="Seeger K."/>
            <person name="Sharp S."/>
            <person name="Skelton J."/>
            <person name="Simmonds M.N."/>
            <person name="Squares R."/>
            <person name="Squares S."/>
            <person name="Stevens K."/>
            <person name="Taylor K."/>
            <person name="Taylor R.G."/>
            <person name="Tivey A."/>
            <person name="Walsh S.V."/>
            <person name="Warren T."/>
            <person name="Whitehead S."/>
            <person name="Woodward J.R."/>
            <person name="Volckaert G."/>
            <person name="Aert R."/>
            <person name="Robben J."/>
            <person name="Grymonprez B."/>
            <person name="Weltjens I."/>
            <person name="Vanstreels E."/>
            <person name="Rieger M."/>
            <person name="Schaefer M."/>
            <person name="Mueller-Auer S."/>
            <person name="Gabel C."/>
            <person name="Fuchs M."/>
            <person name="Duesterhoeft A."/>
            <person name="Fritzc C."/>
            <person name="Holzer E."/>
            <person name="Moestl D."/>
            <person name="Hilbert H."/>
            <person name="Borzym K."/>
            <person name="Langer I."/>
            <person name="Beck A."/>
            <person name="Lehrach H."/>
            <person name="Reinhardt R."/>
            <person name="Pohl T.M."/>
            <person name="Eger P."/>
            <person name="Zimmermann W."/>
            <person name="Wedler H."/>
            <person name="Wambutt R."/>
            <person name="Purnelle B."/>
            <person name="Goffeau A."/>
            <person name="Cadieu E."/>
            <person name="Dreano S."/>
            <person name="Gloux S."/>
            <person name="Lelaure V."/>
            <person name="Mottier S."/>
            <person name="Galibert F."/>
            <person name="Aves S.J."/>
            <person name="Xiang Z."/>
            <person name="Hunt C."/>
            <person name="Moore K."/>
            <person name="Hurst S.M."/>
            <person name="Lucas M."/>
            <person name="Rochet M."/>
            <person name="Gaillardin C."/>
            <person name="Tallada V.A."/>
            <person name="Garzon A."/>
            <person name="Thode G."/>
            <person name="Daga R.R."/>
            <person name="Cruzado L."/>
            <person name="Jimenez J."/>
            <person name="Sanchez M."/>
            <person name="del Rey F."/>
            <person name="Benito J."/>
            <person name="Dominguez A."/>
            <person name="Revuelta J.L."/>
            <person name="Moreno S."/>
            <person name="Armstrong J."/>
            <person name="Forsburg S.L."/>
            <person name="Cerutti L."/>
            <person name="Lowe T."/>
            <person name="McCombie W.R."/>
            <person name="Paulsen I."/>
            <person name="Potashkin J."/>
            <person name="Shpakovski G.V."/>
            <person name="Ussery D."/>
            <person name="Barrell B.G."/>
            <person name="Nurse P."/>
        </authorList>
    </citation>
    <scope>NUCLEOTIDE SEQUENCE [LARGE SCALE GENOMIC DNA]</scope>
    <source>
        <strain>972 / ATCC 24843</strain>
    </source>
</reference>
<reference key="2">
    <citation type="journal article" date="2006" name="Nat. Biotechnol.">
        <title>ORFeome cloning and global analysis of protein localization in the fission yeast Schizosaccharomyces pombe.</title>
        <authorList>
            <person name="Matsuyama A."/>
            <person name="Arai R."/>
            <person name="Yashiroda Y."/>
            <person name="Shirai A."/>
            <person name="Kamata A."/>
            <person name="Sekido S."/>
            <person name="Kobayashi Y."/>
            <person name="Hashimoto A."/>
            <person name="Hamamoto M."/>
            <person name="Hiraoka Y."/>
            <person name="Horinouchi S."/>
            <person name="Yoshida M."/>
        </authorList>
    </citation>
    <scope>SUBCELLULAR LOCATION [LARGE SCALE ANALYSIS]</scope>
</reference>
<dbReference type="EMBL" id="CU329670">
    <property type="protein sequence ID" value="CAA15821.1"/>
    <property type="molecule type" value="Genomic_DNA"/>
</dbReference>
<dbReference type="PIR" id="T38435">
    <property type="entry name" value="T38435"/>
</dbReference>
<dbReference type="SMR" id="O42657"/>
<dbReference type="BioGRID" id="278025">
    <property type="interactions" value="15"/>
</dbReference>
<dbReference type="STRING" id="284812.O42657"/>
<dbReference type="iPTMnet" id="O42657"/>
<dbReference type="PaxDb" id="4896-SPAC27D7.02c.1"/>
<dbReference type="EnsemblFungi" id="SPAC27D7.02c.1">
    <property type="protein sequence ID" value="SPAC27D7.02c.1:pep"/>
    <property type="gene ID" value="SPAC27D7.02c"/>
</dbReference>
<dbReference type="KEGG" id="spo:2541525"/>
<dbReference type="PomBase" id="SPAC27D7.02c"/>
<dbReference type="VEuPathDB" id="FungiDB:SPAC27D7.02c"/>
<dbReference type="HOGENOM" id="CLU_406052_0_0_1"/>
<dbReference type="InParanoid" id="O42657"/>
<dbReference type="OMA" id="MSLKMIN"/>
<dbReference type="PhylomeDB" id="O42657"/>
<dbReference type="PRO" id="PR:O42657"/>
<dbReference type="Proteomes" id="UP000002485">
    <property type="component" value="Chromosome I"/>
</dbReference>
<dbReference type="GO" id="GO:0005737">
    <property type="term" value="C:cytoplasm"/>
    <property type="evidence" value="ECO:0007005"/>
    <property type="project" value="PomBase"/>
</dbReference>
<dbReference type="GO" id="GO:0005829">
    <property type="term" value="C:cytosol"/>
    <property type="evidence" value="ECO:0007005"/>
    <property type="project" value="PomBase"/>
</dbReference>
<dbReference type="GO" id="GO:0005794">
    <property type="term" value="C:Golgi apparatus"/>
    <property type="evidence" value="ECO:0000266"/>
    <property type="project" value="PomBase"/>
</dbReference>
<dbReference type="GO" id="GO:0043001">
    <property type="term" value="P:Golgi to plasma membrane protein transport"/>
    <property type="evidence" value="ECO:0000266"/>
    <property type="project" value="PomBase"/>
</dbReference>
<dbReference type="GO" id="GO:0006886">
    <property type="term" value="P:intracellular protein transport"/>
    <property type="evidence" value="ECO:0000305"/>
    <property type="project" value="PomBase"/>
</dbReference>
<dbReference type="Gene3D" id="1.10.287.1490">
    <property type="match status" value="1"/>
</dbReference>
<dbReference type="InterPro" id="IPR000237">
    <property type="entry name" value="GRIP_dom"/>
</dbReference>
<dbReference type="PANTHER" id="PTHR23159">
    <property type="entry name" value="CENTROSOMAL PROTEIN 2"/>
    <property type="match status" value="1"/>
</dbReference>
<dbReference type="PANTHER" id="PTHR23159:SF31">
    <property type="entry name" value="CENTROSOME-ASSOCIATED PROTEIN CEP250 ISOFORM X1"/>
    <property type="match status" value="1"/>
</dbReference>
<dbReference type="Pfam" id="PF01465">
    <property type="entry name" value="GRIP"/>
    <property type="match status" value="1"/>
</dbReference>
<dbReference type="SMART" id="SM00755">
    <property type="entry name" value="Grip"/>
    <property type="match status" value="1"/>
</dbReference>
<dbReference type="PROSITE" id="PS50913">
    <property type="entry name" value="GRIP"/>
    <property type="match status" value="1"/>
</dbReference>
<keyword id="KW-0175">Coiled coil</keyword>
<keyword id="KW-0963">Cytoplasm</keyword>
<keyword id="KW-1185">Reference proteome</keyword>
<comment type="subcellular location">
    <subcellularLocation>
        <location evidence="4">Cytoplasm</location>
    </subcellularLocation>
</comment>
<feature type="chain" id="PRO_0000317081" description="GRIP and coiled-coil domain-containing protein C27D7.02c">
    <location>
        <begin position="1"/>
        <end position="750"/>
    </location>
</feature>
<feature type="domain" description="GRIP" evidence="2">
    <location>
        <begin position="700"/>
        <end position="748"/>
    </location>
</feature>
<feature type="region of interest" description="Disordered" evidence="3">
    <location>
        <begin position="14"/>
        <end position="53"/>
    </location>
</feature>
<feature type="region of interest" description="Disordered" evidence="3">
    <location>
        <begin position="188"/>
        <end position="280"/>
    </location>
</feature>
<feature type="region of interest" description="Disordered" evidence="3">
    <location>
        <begin position="672"/>
        <end position="703"/>
    </location>
</feature>
<feature type="coiled-coil region" evidence="1">
    <location>
        <begin position="28"/>
        <end position="182"/>
    </location>
</feature>
<feature type="coiled-coil region" evidence="1">
    <location>
        <begin position="213"/>
        <end position="243"/>
    </location>
</feature>
<feature type="coiled-coil region" evidence="1">
    <location>
        <begin position="344"/>
        <end position="665"/>
    </location>
</feature>
<feature type="compositionally biased region" description="Basic and acidic residues" evidence="3">
    <location>
        <begin position="18"/>
        <end position="34"/>
    </location>
</feature>
<feature type="compositionally biased region" description="Basic and acidic residues" evidence="3">
    <location>
        <begin position="188"/>
        <end position="198"/>
    </location>
</feature>
<feature type="compositionally biased region" description="Polar residues" evidence="3">
    <location>
        <begin position="201"/>
        <end position="213"/>
    </location>
</feature>
<feature type="compositionally biased region" description="Basic residues" evidence="3">
    <location>
        <begin position="214"/>
        <end position="230"/>
    </location>
</feature>
<feature type="compositionally biased region" description="Polar residues" evidence="3">
    <location>
        <begin position="233"/>
        <end position="251"/>
    </location>
</feature>
<feature type="compositionally biased region" description="Basic and acidic residues" evidence="3">
    <location>
        <begin position="269"/>
        <end position="280"/>
    </location>
</feature>
<feature type="compositionally biased region" description="Low complexity" evidence="3">
    <location>
        <begin position="676"/>
        <end position="693"/>
    </location>
</feature>
<feature type="compositionally biased region" description="Basic and acidic residues" evidence="3">
    <location>
        <begin position="694"/>
        <end position="703"/>
    </location>
</feature>
<proteinExistence type="predicted"/>
<accession>O42657</accession>
<gene>
    <name type="ORF">SPAC27D7.02c</name>
</gene>
<sequence length="750" mass="87265">MLGRLKDQLNMTLAQGQEEAKNRRRQFQEEDQLRRNNKSSNKLSQNEEDAKNMDSVVQKLNELQNNVVAFQKLLQEKTPLSSIQDLEGFREFMENLEHRYEMTVSEVRRLSHEVNDLQTDRENLKHQFEDQIEKLNSEISNQNSLILQKKDELEKSIQRCSELEEKINSLESAQSIEQEVISSLKDDKTVETKNDVPEVSRPSTDTIGVSSALSKKKKKRNRKNQKKKSTKQNIEATTENDALSESISTPDIQKVAQSEDVDAEQDTVADSKEEERRDIANDDLIVNANAKEPMHHFSFTDLDTLLNWPKYVFHHHKIHLADTIPLVFLDLKPKEYTVDLETPKLVEELTKQLHVAESTLKENSEKFKQNSESLKSRVDNLNDYITKLQNEIDECRRNLLWAESSCETIREENQKNIKKLNDAESLKSRLLQSRTQMQTELDSYITSNSQLKDEITSLKQTVSESEAERKRLFSSAQEKQLQMKETVNKLTSLQEQNNEFDRQLKEQEEDLQNKEEELTELRKLLREQTQDSQKLRLLVEQLELERQDLKQAGENHYSNLSSDYETQIKSLESSLTNSQAECVSFQEKINELNSQIDELKLKLNEANKKYQELAISFENSNVKTQSVEPDNGLSLEALKNENQTLLKNLEDSTARYEHLQKSFKNVFNQLRKQQPSNHGRNSSVSRSSSSVEVNSKHPGSDDMLIDKEYTRNILFQFLEQRDRRPEIVNLLSILLDLSEEQKQKLLSVKY</sequence>